<proteinExistence type="evidence at transcript level"/>
<gene>
    <name type="primary">TUBB3</name>
    <name type="synonym">TUB3</name>
</gene>
<feature type="chain" id="PRO_0000048357" description="Tubulin beta-3 chain">
    <location>
        <begin position="1"/>
        <end position="445"/>
    </location>
</feature>
<feature type="region of interest" description="Disordered" evidence="3">
    <location>
        <begin position="425"/>
        <end position="445"/>
    </location>
</feature>
<feature type="compositionally biased region" description="Acidic residues" evidence="3">
    <location>
        <begin position="429"/>
        <end position="445"/>
    </location>
</feature>
<feature type="binding site" evidence="2">
    <location>
        <position position="11"/>
    </location>
    <ligand>
        <name>GTP</name>
        <dbReference type="ChEBI" id="CHEBI:37565"/>
    </ligand>
</feature>
<feature type="binding site" evidence="1">
    <location>
        <position position="69"/>
    </location>
    <ligand>
        <name>GTP</name>
        <dbReference type="ChEBI" id="CHEBI:37565"/>
    </ligand>
</feature>
<feature type="binding site" evidence="1">
    <location>
        <position position="69"/>
    </location>
    <ligand>
        <name>Mg(2+)</name>
        <dbReference type="ChEBI" id="CHEBI:18420"/>
    </ligand>
</feature>
<feature type="binding site" evidence="2">
    <location>
        <position position="138"/>
    </location>
    <ligand>
        <name>GTP</name>
        <dbReference type="ChEBI" id="CHEBI:37565"/>
    </ligand>
</feature>
<feature type="binding site" evidence="2">
    <location>
        <position position="142"/>
    </location>
    <ligand>
        <name>GTP</name>
        <dbReference type="ChEBI" id="CHEBI:37565"/>
    </ligand>
</feature>
<feature type="binding site" evidence="2">
    <location>
        <position position="143"/>
    </location>
    <ligand>
        <name>GTP</name>
        <dbReference type="ChEBI" id="CHEBI:37565"/>
    </ligand>
</feature>
<feature type="binding site" evidence="2">
    <location>
        <position position="144"/>
    </location>
    <ligand>
        <name>GTP</name>
        <dbReference type="ChEBI" id="CHEBI:37565"/>
    </ligand>
</feature>
<feature type="binding site" evidence="2">
    <location>
        <position position="204"/>
    </location>
    <ligand>
        <name>GTP</name>
        <dbReference type="ChEBI" id="CHEBI:37565"/>
    </ligand>
</feature>
<feature type="binding site" evidence="2">
    <location>
        <position position="226"/>
    </location>
    <ligand>
        <name>GTP</name>
        <dbReference type="ChEBI" id="CHEBI:37565"/>
    </ligand>
</feature>
<accession>Q43695</accession>
<reference key="1">
    <citation type="journal article" date="1993" name="Plant J.">
        <title>Four members of the maize beta-tubulin gene family are expressed in the male gametophyte.</title>
        <authorList>
            <person name="Rogers H.J."/>
            <person name="Greenland A.J."/>
            <person name="Hussey P.J."/>
        </authorList>
    </citation>
    <scope>NUCLEOTIDE SEQUENCE [MRNA]</scope>
    <source>
        <strain>cv. A188</strain>
        <tissue>Pollen</tissue>
    </source>
</reference>
<protein>
    <recommendedName>
        <fullName>Tubulin beta-3 chain</fullName>
    </recommendedName>
    <alternativeName>
        <fullName>Beta-3-tubulin</fullName>
    </alternativeName>
</protein>
<keyword id="KW-0963">Cytoplasm</keyword>
<keyword id="KW-0206">Cytoskeleton</keyword>
<keyword id="KW-0342">GTP-binding</keyword>
<keyword id="KW-0460">Magnesium</keyword>
<keyword id="KW-0479">Metal-binding</keyword>
<keyword id="KW-0493">Microtubule</keyword>
<keyword id="KW-0547">Nucleotide-binding</keyword>
<keyword id="KW-1185">Reference proteome</keyword>
<sequence length="445" mass="49810">MREILHIQGGQCGNQIGAKFWEVICGEHGVDSTGCYSGVSPQQLERINVYYNEAGGGRYVPRAVLMDLEPGTMESIRAGPFGGIFRPDNFVYGQSGAGNNWAKGHYTEGAELIDSVLDVVRKEAENCDCLQGFQVCHSLGGGTGSGMGTLLISKIREEYPDRMMLTFSVFPSPKVSDTVVEPYNATLSVHQLVENADECMVLDNEALYDICFRTLKLTNPSFGDLNHLISATMSGVTCCLRFPGQLNSDLRKLAVNLIPFPRLHFFMVGFAPLTSRGSQQYRALTVPELTQQMWDAKNMMCAADPRHGRYLTASAMFRGKMSTKEVDEQMINVQNKNSSYFVEWIPNNVKSSVCDIPPVGLSMSSTFVGNSTSIQEMFRRVSEQFTAMFRRKAFLHWYTSEGMDEMEFTEAESNMNDLVAEYQQYQDATAEEYDEEEQDGEEEHD</sequence>
<dbReference type="EMBL" id="X74654">
    <property type="protein sequence ID" value="CAA52718.1"/>
    <property type="molecule type" value="mRNA"/>
</dbReference>
<dbReference type="RefSeq" id="NP_001105456.1">
    <property type="nucleotide sequence ID" value="NM_001111986.1"/>
</dbReference>
<dbReference type="SMR" id="Q43695"/>
<dbReference type="FunCoup" id="Q43695">
    <property type="interactions" value="1857"/>
</dbReference>
<dbReference type="STRING" id="4577.Q43695"/>
<dbReference type="PaxDb" id="4577-GRMZM2G108766_P02"/>
<dbReference type="GeneID" id="542416"/>
<dbReference type="KEGG" id="zma:542416"/>
<dbReference type="eggNOG" id="KOG1375">
    <property type="taxonomic scope" value="Eukaryota"/>
</dbReference>
<dbReference type="InParanoid" id="Q43695"/>
<dbReference type="OrthoDB" id="732292at2759"/>
<dbReference type="Proteomes" id="UP000007305">
    <property type="component" value="Unplaced"/>
</dbReference>
<dbReference type="ExpressionAtlas" id="Q43695">
    <property type="expression patterns" value="baseline and differential"/>
</dbReference>
<dbReference type="GO" id="GO:0005737">
    <property type="term" value="C:cytoplasm"/>
    <property type="evidence" value="ECO:0000318"/>
    <property type="project" value="GO_Central"/>
</dbReference>
<dbReference type="GO" id="GO:0005874">
    <property type="term" value="C:microtubule"/>
    <property type="evidence" value="ECO:0000318"/>
    <property type="project" value="GO_Central"/>
</dbReference>
<dbReference type="GO" id="GO:0005525">
    <property type="term" value="F:GTP binding"/>
    <property type="evidence" value="ECO:0000318"/>
    <property type="project" value="GO_Central"/>
</dbReference>
<dbReference type="GO" id="GO:0003924">
    <property type="term" value="F:GTPase activity"/>
    <property type="evidence" value="ECO:0007669"/>
    <property type="project" value="InterPro"/>
</dbReference>
<dbReference type="GO" id="GO:0046872">
    <property type="term" value="F:metal ion binding"/>
    <property type="evidence" value="ECO:0007669"/>
    <property type="project" value="UniProtKB-KW"/>
</dbReference>
<dbReference type="GO" id="GO:0005200">
    <property type="term" value="F:structural constituent of cytoskeleton"/>
    <property type="evidence" value="ECO:0000318"/>
    <property type="project" value="GO_Central"/>
</dbReference>
<dbReference type="GO" id="GO:0000226">
    <property type="term" value="P:microtubule cytoskeleton organization"/>
    <property type="evidence" value="ECO:0000318"/>
    <property type="project" value="GO_Central"/>
</dbReference>
<dbReference type="GO" id="GO:0000278">
    <property type="term" value="P:mitotic cell cycle"/>
    <property type="evidence" value="ECO:0000318"/>
    <property type="project" value="GO_Central"/>
</dbReference>
<dbReference type="CDD" id="cd02187">
    <property type="entry name" value="beta_tubulin"/>
    <property type="match status" value="1"/>
</dbReference>
<dbReference type="FunFam" id="1.10.287.600:FF:000002">
    <property type="entry name" value="Tubulin beta chain"/>
    <property type="match status" value="1"/>
</dbReference>
<dbReference type="FunFam" id="3.30.1330.20:FF:000002">
    <property type="entry name" value="Tubulin beta chain"/>
    <property type="match status" value="1"/>
</dbReference>
<dbReference type="FunFam" id="3.40.50.1440:FF:000005">
    <property type="entry name" value="Tubulin beta chain"/>
    <property type="match status" value="1"/>
</dbReference>
<dbReference type="Gene3D" id="1.10.287.600">
    <property type="entry name" value="Helix hairpin bin"/>
    <property type="match status" value="1"/>
</dbReference>
<dbReference type="Gene3D" id="3.30.1330.20">
    <property type="entry name" value="Tubulin/FtsZ, C-terminal domain"/>
    <property type="match status" value="1"/>
</dbReference>
<dbReference type="Gene3D" id="3.40.50.1440">
    <property type="entry name" value="Tubulin/FtsZ, GTPase domain"/>
    <property type="match status" value="1"/>
</dbReference>
<dbReference type="InterPro" id="IPR013838">
    <property type="entry name" value="Beta-tubulin_BS"/>
</dbReference>
<dbReference type="InterPro" id="IPR002453">
    <property type="entry name" value="Beta_tubulin"/>
</dbReference>
<dbReference type="InterPro" id="IPR008280">
    <property type="entry name" value="Tub_FtsZ_C"/>
</dbReference>
<dbReference type="InterPro" id="IPR000217">
    <property type="entry name" value="Tubulin"/>
</dbReference>
<dbReference type="InterPro" id="IPR037103">
    <property type="entry name" value="Tubulin/FtsZ-like_C"/>
</dbReference>
<dbReference type="InterPro" id="IPR018316">
    <property type="entry name" value="Tubulin/FtsZ_2-layer-sand-dom"/>
</dbReference>
<dbReference type="InterPro" id="IPR036525">
    <property type="entry name" value="Tubulin/FtsZ_GTPase_sf"/>
</dbReference>
<dbReference type="InterPro" id="IPR023123">
    <property type="entry name" value="Tubulin_C"/>
</dbReference>
<dbReference type="InterPro" id="IPR017975">
    <property type="entry name" value="Tubulin_CS"/>
</dbReference>
<dbReference type="InterPro" id="IPR003008">
    <property type="entry name" value="Tubulin_FtsZ_GTPase"/>
</dbReference>
<dbReference type="PANTHER" id="PTHR11588">
    <property type="entry name" value="TUBULIN"/>
    <property type="match status" value="1"/>
</dbReference>
<dbReference type="Pfam" id="PF00091">
    <property type="entry name" value="Tubulin"/>
    <property type="match status" value="1"/>
</dbReference>
<dbReference type="Pfam" id="PF03953">
    <property type="entry name" value="Tubulin_C"/>
    <property type="match status" value="1"/>
</dbReference>
<dbReference type="PRINTS" id="PR01163">
    <property type="entry name" value="BETATUBULIN"/>
</dbReference>
<dbReference type="PRINTS" id="PR01161">
    <property type="entry name" value="TUBULIN"/>
</dbReference>
<dbReference type="SMART" id="SM00864">
    <property type="entry name" value="Tubulin"/>
    <property type="match status" value="1"/>
</dbReference>
<dbReference type="SMART" id="SM00865">
    <property type="entry name" value="Tubulin_C"/>
    <property type="match status" value="1"/>
</dbReference>
<dbReference type="SUPFAM" id="SSF55307">
    <property type="entry name" value="Tubulin C-terminal domain-like"/>
    <property type="match status" value="1"/>
</dbReference>
<dbReference type="SUPFAM" id="SSF52490">
    <property type="entry name" value="Tubulin nucleotide-binding domain-like"/>
    <property type="match status" value="1"/>
</dbReference>
<dbReference type="PROSITE" id="PS00227">
    <property type="entry name" value="TUBULIN"/>
    <property type="match status" value="1"/>
</dbReference>
<dbReference type="PROSITE" id="PS00228">
    <property type="entry name" value="TUBULIN_B_AUTOREG"/>
    <property type="match status" value="1"/>
</dbReference>
<evidence type="ECO:0000250" key="1">
    <source>
        <dbReference type="UniProtKB" id="P68363"/>
    </source>
</evidence>
<evidence type="ECO:0000250" key="2">
    <source>
        <dbReference type="UniProtKB" id="Q13509"/>
    </source>
</evidence>
<evidence type="ECO:0000256" key="3">
    <source>
        <dbReference type="SAM" id="MobiDB-lite"/>
    </source>
</evidence>
<evidence type="ECO:0000305" key="4"/>
<name>TBB3_MAIZE</name>
<organism>
    <name type="scientific">Zea mays</name>
    <name type="common">Maize</name>
    <dbReference type="NCBI Taxonomy" id="4577"/>
    <lineage>
        <taxon>Eukaryota</taxon>
        <taxon>Viridiplantae</taxon>
        <taxon>Streptophyta</taxon>
        <taxon>Embryophyta</taxon>
        <taxon>Tracheophyta</taxon>
        <taxon>Spermatophyta</taxon>
        <taxon>Magnoliopsida</taxon>
        <taxon>Liliopsida</taxon>
        <taxon>Poales</taxon>
        <taxon>Poaceae</taxon>
        <taxon>PACMAD clade</taxon>
        <taxon>Panicoideae</taxon>
        <taxon>Andropogonodae</taxon>
        <taxon>Andropogoneae</taxon>
        <taxon>Tripsacinae</taxon>
        <taxon>Zea</taxon>
    </lineage>
</organism>
<comment type="function">
    <text>Tubulin is the major constituent of microtubules, a cylinder consisting of laterally associated linear protofilaments composed of alpha- and beta-tubulin heterodimers. Microtubules grow by the addition of GTP-tubulin dimers to the microtubule end, where a stabilizing cap forms. Below the cap, tubulin dimers are in GDP-bound state, owing to GTPase activity of alpha-tubulin.</text>
</comment>
<comment type="cofactor">
    <cofactor evidence="1">
        <name>Mg(2+)</name>
        <dbReference type="ChEBI" id="CHEBI:18420"/>
    </cofactor>
</comment>
<comment type="subunit">
    <text>Dimer of alpha and beta chains. A typical microtubule is a hollow water-filled tube with an outer diameter of 25 nm and an inner diameter of 15 nM. Alpha-beta heterodimers associate head-to-tail to form protofilaments running lengthwise along the microtubule wall with the beta-tubulin subunit facing the microtubule plus end conferring a structural polarity. Microtubules usually have 13 protofilaments but different protofilament numbers can be found in some organisms and specialized cells.</text>
</comment>
<comment type="subcellular location">
    <subcellularLocation>
        <location>Cytoplasm</location>
        <location>Cytoskeleton</location>
    </subcellularLocation>
</comment>
<comment type="similarity">
    <text evidence="4">Belongs to the tubulin family.</text>
</comment>